<proteinExistence type="inferred from homology"/>
<evidence type="ECO:0000250" key="1"/>
<evidence type="ECO:0000256" key="2">
    <source>
        <dbReference type="SAM" id="MobiDB-lite"/>
    </source>
</evidence>
<evidence type="ECO:0000305" key="3"/>
<organism>
    <name type="scientific">Emericella nidulans (strain FGSC A4 / ATCC 38163 / CBS 112.46 / NRRL 194 / M139)</name>
    <name type="common">Aspergillus nidulans</name>
    <dbReference type="NCBI Taxonomy" id="227321"/>
    <lineage>
        <taxon>Eukaryota</taxon>
        <taxon>Fungi</taxon>
        <taxon>Dikarya</taxon>
        <taxon>Ascomycota</taxon>
        <taxon>Pezizomycotina</taxon>
        <taxon>Eurotiomycetes</taxon>
        <taxon>Eurotiomycetidae</taxon>
        <taxon>Eurotiales</taxon>
        <taxon>Aspergillaceae</taxon>
        <taxon>Aspergillus</taxon>
        <taxon>Aspergillus subgen. Nidulantes</taxon>
    </lineage>
</organism>
<protein>
    <recommendedName>
        <fullName>DNA repair and recombination protein radC</fullName>
    </recommendedName>
    <alternativeName>
        <fullName>RAD52 homolog</fullName>
    </alternativeName>
</protein>
<sequence length="582" mass="61912">MPDATGVIARNPFEEAPSRLNQYTPEEAAALQARLEKKLGPEYISSRPGAAGLKVHYLAADKCINLANEVFGFNGWSSSIQNIQIDFVDESPNTGKVSLGLSVIVRVTLKDGAYHEDLGYGHIENCKGKAAAFEKAKKEATTDALKRALRNFGNVLGNCIYDKDYISKVSKLKTVPSKLDVGDLHRHPDFAPIKKEPMRVKPSLEDDDLPPNPSIAGRNTSTNSAADMDAEFGSDVFDEADFNVGEGEYPDGIVAEDTQKRHQPPTPVGRPNAHLNLPKHALGAQASGNQHVVTPSKPERPMNLAPAGRQIPNQALNNRPFPPPAQNQYTNQRQSVPLPGSNGGLQNGRSIPLGQRASNGMATGSDAGAQVPIKQEHGAKQPNPAPQNTAVPATPGINGQGPPVVGFLSARGADMLRENPHSAATVAPAFNPHAESPSIRKTAGVDHTKSIPISKPMLAGSASPLSNQTRDFINPSAEMHRKIGAPSGSVVGGPMNRGPSVSSYRPLTRPNVDPKAAAQNNTAAANRMAPNMNGKRPPLNDVTNETLPGGNGCTPAPGLNDPKRAKYDESMSAQQHQQQHQH</sequence>
<name>RAD52_EMENI</name>
<dbReference type="EMBL" id="AY032591">
    <property type="protein sequence ID" value="AAK50143.1"/>
    <property type="molecule type" value="Genomic_DNA"/>
</dbReference>
<dbReference type="EMBL" id="AACD01000076">
    <property type="protein sequence ID" value="EAA60324.1"/>
    <property type="molecule type" value="Genomic_DNA"/>
</dbReference>
<dbReference type="EMBL" id="BN001303">
    <property type="protein sequence ID" value="CBF77590.1"/>
    <property type="molecule type" value="Genomic_DNA"/>
</dbReference>
<dbReference type="RefSeq" id="XP_662011.1">
    <property type="nucleotide sequence ID" value="XM_656919.1"/>
</dbReference>
<dbReference type="SMR" id="Q96UP6"/>
<dbReference type="STRING" id="227321.Q96UP6"/>
<dbReference type="EnsemblFungi" id="CBF77590">
    <property type="protein sequence ID" value="CBF77590"/>
    <property type="gene ID" value="ANIA_04407"/>
</dbReference>
<dbReference type="KEGG" id="ani:ANIA_04407"/>
<dbReference type="eggNOG" id="KOG4141">
    <property type="taxonomic scope" value="Eukaryota"/>
</dbReference>
<dbReference type="HOGENOM" id="CLU_011431_4_0_1"/>
<dbReference type="InParanoid" id="Q96UP6"/>
<dbReference type="OMA" id="NLHRHAD"/>
<dbReference type="OrthoDB" id="206565at2759"/>
<dbReference type="Proteomes" id="UP000000560">
    <property type="component" value="Chromosome III"/>
</dbReference>
<dbReference type="GO" id="GO:0005634">
    <property type="term" value="C:nucleus"/>
    <property type="evidence" value="ECO:0000318"/>
    <property type="project" value="GO_Central"/>
</dbReference>
<dbReference type="GO" id="GO:0003677">
    <property type="term" value="F:DNA binding"/>
    <property type="evidence" value="ECO:0007669"/>
    <property type="project" value="UniProtKB-KW"/>
</dbReference>
<dbReference type="GO" id="GO:0000730">
    <property type="term" value="P:DNA recombinase assembly"/>
    <property type="evidence" value="ECO:0007669"/>
    <property type="project" value="InterPro"/>
</dbReference>
<dbReference type="GO" id="GO:0000724">
    <property type="term" value="P:double-strand break repair via homologous recombination"/>
    <property type="evidence" value="ECO:0000318"/>
    <property type="project" value="GO_Central"/>
</dbReference>
<dbReference type="GO" id="GO:0045002">
    <property type="term" value="P:double-strand break repair via single-strand annealing"/>
    <property type="evidence" value="ECO:0000318"/>
    <property type="project" value="GO_Central"/>
</dbReference>
<dbReference type="GO" id="GO:0006312">
    <property type="term" value="P:mitotic recombination"/>
    <property type="evidence" value="ECO:0000318"/>
    <property type="project" value="GO_Central"/>
</dbReference>
<dbReference type="FunFam" id="3.30.390.80:FF:000001">
    <property type="entry name" value="DNA repair protein RAD52 homolog"/>
    <property type="match status" value="1"/>
</dbReference>
<dbReference type="Gene3D" id="3.30.390.80">
    <property type="entry name" value="DNA repair protein Rad52/59/22"/>
    <property type="match status" value="1"/>
</dbReference>
<dbReference type="InterPro" id="IPR004585">
    <property type="entry name" value="DNA_recomb/repair_Rad52"/>
</dbReference>
<dbReference type="InterPro" id="IPR041247">
    <property type="entry name" value="Rad52_fam"/>
</dbReference>
<dbReference type="InterPro" id="IPR007232">
    <property type="entry name" value="Rad52_Rad59_Rad22"/>
</dbReference>
<dbReference type="InterPro" id="IPR042525">
    <property type="entry name" value="Rad52_Rad59_Rad22_sf"/>
</dbReference>
<dbReference type="NCBIfam" id="TIGR00607">
    <property type="entry name" value="rad52"/>
    <property type="match status" value="1"/>
</dbReference>
<dbReference type="PANTHER" id="PTHR12132">
    <property type="entry name" value="DNA REPAIR AND RECOMBINATION PROTEIN RAD52, RAD59"/>
    <property type="match status" value="1"/>
</dbReference>
<dbReference type="PANTHER" id="PTHR12132:SF1">
    <property type="entry name" value="DNA REPAIR PROTEIN RAD52 HOMOLOG"/>
    <property type="match status" value="1"/>
</dbReference>
<dbReference type="Pfam" id="PF04098">
    <property type="entry name" value="Rad52_Rad22"/>
    <property type="match status" value="1"/>
</dbReference>
<dbReference type="SUPFAM" id="SSF54768">
    <property type="entry name" value="dsRNA-binding domain-like"/>
    <property type="match status" value="1"/>
</dbReference>
<reference key="1">
    <citation type="submission" date="2001-04" db="EMBL/GenBank/DDBJ databases">
        <title>A RAD52 homolog in Aspergillus nidulans as an interactor of UVSC and characterization of its null mutant.</title>
        <authorList>
            <person name="Ka S.-H."/>
            <person name="Lee N.-S."/>
            <person name="Kafer E."/>
            <person name="Chae S.-K."/>
        </authorList>
    </citation>
    <scope>NUCLEOTIDE SEQUENCE [GENOMIC DNA]</scope>
</reference>
<reference key="2">
    <citation type="journal article" date="2005" name="Nature">
        <title>Sequencing of Aspergillus nidulans and comparative analysis with A. fumigatus and A. oryzae.</title>
        <authorList>
            <person name="Galagan J.E."/>
            <person name="Calvo S.E."/>
            <person name="Cuomo C."/>
            <person name="Ma L.-J."/>
            <person name="Wortman J.R."/>
            <person name="Batzoglou S."/>
            <person name="Lee S.-I."/>
            <person name="Bastuerkmen M."/>
            <person name="Spevak C.C."/>
            <person name="Clutterbuck J."/>
            <person name="Kapitonov V."/>
            <person name="Jurka J."/>
            <person name="Scazzocchio C."/>
            <person name="Farman M.L."/>
            <person name="Butler J."/>
            <person name="Purcell S."/>
            <person name="Harris S."/>
            <person name="Braus G.H."/>
            <person name="Draht O."/>
            <person name="Busch S."/>
            <person name="D'Enfert C."/>
            <person name="Bouchier C."/>
            <person name="Goldman G.H."/>
            <person name="Bell-Pedersen D."/>
            <person name="Griffiths-Jones S."/>
            <person name="Doonan J.H."/>
            <person name="Yu J."/>
            <person name="Vienken K."/>
            <person name="Pain A."/>
            <person name="Freitag M."/>
            <person name="Selker E.U."/>
            <person name="Archer D.B."/>
            <person name="Penalva M.A."/>
            <person name="Oakley B.R."/>
            <person name="Momany M."/>
            <person name="Tanaka T."/>
            <person name="Kumagai T."/>
            <person name="Asai K."/>
            <person name="Machida M."/>
            <person name="Nierman W.C."/>
            <person name="Denning D.W."/>
            <person name="Caddick M.X."/>
            <person name="Hynes M."/>
            <person name="Paoletti M."/>
            <person name="Fischer R."/>
            <person name="Miller B.L."/>
            <person name="Dyer P.S."/>
            <person name="Sachs M.S."/>
            <person name="Osmani S.A."/>
            <person name="Birren B.W."/>
        </authorList>
    </citation>
    <scope>NUCLEOTIDE SEQUENCE [LARGE SCALE GENOMIC DNA]</scope>
    <source>
        <strain>FGSC A4 / ATCC 38163 / CBS 112.46 / NRRL 194 / M139</strain>
    </source>
</reference>
<reference key="3">
    <citation type="journal article" date="2009" name="Fungal Genet. Biol.">
        <title>The 2008 update of the Aspergillus nidulans genome annotation: a community effort.</title>
        <authorList>
            <person name="Wortman J.R."/>
            <person name="Gilsenan J.M."/>
            <person name="Joardar V."/>
            <person name="Deegan J."/>
            <person name="Clutterbuck J."/>
            <person name="Andersen M.R."/>
            <person name="Archer D."/>
            <person name="Bencina M."/>
            <person name="Braus G."/>
            <person name="Coutinho P."/>
            <person name="von Dohren H."/>
            <person name="Doonan J."/>
            <person name="Driessen A.J."/>
            <person name="Durek P."/>
            <person name="Espeso E."/>
            <person name="Fekete E."/>
            <person name="Flipphi M."/>
            <person name="Estrada C.G."/>
            <person name="Geysens S."/>
            <person name="Goldman G."/>
            <person name="de Groot P.W."/>
            <person name="Hansen K."/>
            <person name="Harris S.D."/>
            <person name="Heinekamp T."/>
            <person name="Helmstaedt K."/>
            <person name="Henrissat B."/>
            <person name="Hofmann G."/>
            <person name="Homan T."/>
            <person name="Horio T."/>
            <person name="Horiuchi H."/>
            <person name="James S."/>
            <person name="Jones M."/>
            <person name="Karaffa L."/>
            <person name="Karanyi Z."/>
            <person name="Kato M."/>
            <person name="Keller N."/>
            <person name="Kelly D.E."/>
            <person name="Kiel J.A."/>
            <person name="Kim J.M."/>
            <person name="van der Klei I.J."/>
            <person name="Klis F.M."/>
            <person name="Kovalchuk A."/>
            <person name="Krasevec N."/>
            <person name="Kubicek C.P."/>
            <person name="Liu B."/>
            <person name="Maccabe A."/>
            <person name="Meyer V."/>
            <person name="Mirabito P."/>
            <person name="Miskei M."/>
            <person name="Mos M."/>
            <person name="Mullins J."/>
            <person name="Nelson D.R."/>
            <person name="Nielsen J."/>
            <person name="Oakley B.R."/>
            <person name="Osmani S.A."/>
            <person name="Pakula T."/>
            <person name="Paszewski A."/>
            <person name="Paulsen I."/>
            <person name="Pilsyk S."/>
            <person name="Pocsi I."/>
            <person name="Punt P.J."/>
            <person name="Ram A.F."/>
            <person name="Ren Q."/>
            <person name="Robellet X."/>
            <person name="Robson G."/>
            <person name="Seiboth B."/>
            <person name="van Solingen P."/>
            <person name="Specht T."/>
            <person name="Sun J."/>
            <person name="Taheri-Talesh N."/>
            <person name="Takeshita N."/>
            <person name="Ussery D."/>
            <person name="vanKuyk P.A."/>
            <person name="Visser H."/>
            <person name="van de Vondervoort P.J."/>
            <person name="de Vries R.P."/>
            <person name="Walton J."/>
            <person name="Xiang X."/>
            <person name="Xiong Y."/>
            <person name="Zeng A.P."/>
            <person name="Brandt B.W."/>
            <person name="Cornell M.J."/>
            <person name="van den Hondel C.A."/>
            <person name="Visser J."/>
            <person name="Oliver S.G."/>
            <person name="Turner G."/>
        </authorList>
    </citation>
    <scope>GENOME REANNOTATION</scope>
    <source>
        <strain>FGSC A4 / ATCC 38163 / CBS 112.46 / NRRL 194 / M139</strain>
    </source>
</reference>
<comment type="function">
    <text evidence="1">Involved in DNA double-strand break (DSB) repair and recombination. Promotes the annealing of complementary single-stranded DNA and by stimulation of the RAD51 recombinase (By similarity).</text>
</comment>
<comment type="subunit">
    <text evidence="1">Part of a complex that includes RAD51, RAD52 and RAD59.</text>
</comment>
<comment type="subcellular location">
    <subcellularLocation>
        <location evidence="1">Nucleus</location>
    </subcellularLocation>
</comment>
<comment type="similarity">
    <text evidence="3">Belongs to the RAD52 family.</text>
</comment>
<accession>Q96UP6</accession>
<accession>C8V8T5</accession>
<accession>Q5B4X3</accession>
<keyword id="KW-0227">DNA damage</keyword>
<keyword id="KW-0233">DNA recombination</keyword>
<keyword id="KW-0234">DNA repair</keyword>
<keyword id="KW-0238">DNA-binding</keyword>
<keyword id="KW-0539">Nucleus</keyword>
<keyword id="KW-1185">Reference proteome</keyword>
<feature type="chain" id="PRO_0000173887" description="DNA repair and recombination protein radC">
    <location>
        <begin position="1"/>
        <end position="582"/>
    </location>
</feature>
<feature type="DNA-binding region" evidence="1">
    <location>
        <begin position="146"/>
        <end position="150"/>
    </location>
</feature>
<feature type="region of interest" description="Disordered" evidence="2">
    <location>
        <begin position="194"/>
        <end position="226"/>
    </location>
</feature>
<feature type="region of interest" description="Disordered" evidence="2">
    <location>
        <begin position="310"/>
        <end position="400"/>
    </location>
</feature>
<feature type="region of interest" description="Disordered" evidence="2">
    <location>
        <begin position="485"/>
        <end position="582"/>
    </location>
</feature>
<feature type="compositionally biased region" description="Basic and acidic residues" evidence="2">
    <location>
        <begin position="194"/>
        <end position="204"/>
    </location>
</feature>
<feature type="compositionally biased region" description="Polar residues" evidence="2">
    <location>
        <begin position="326"/>
        <end position="335"/>
    </location>
</feature>
<feature type="compositionally biased region" description="Low complexity" evidence="2">
    <location>
        <begin position="516"/>
        <end position="529"/>
    </location>
</feature>
<gene>
    <name type="primary">radC</name>
    <name type="ORF">AN4407</name>
</gene>